<protein>
    <recommendedName>
        <fullName evidence="5">Immunoglobulin domain-containing protein oig-4</fullName>
    </recommendedName>
</protein>
<keyword id="KW-1015">Disulfide bond</keyword>
<keyword id="KW-0325">Glycoprotein</keyword>
<keyword id="KW-0393">Immunoglobulin domain</keyword>
<keyword id="KW-1185">Reference proteome</keyword>
<keyword id="KW-0964">Secreted</keyword>
<keyword id="KW-0732">Signal</keyword>
<keyword id="KW-0770">Synapse</keyword>
<dbReference type="EMBL" id="BX284602">
    <property type="protein sequence ID" value="CCD70521.1"/>
    <property type="molecule type" value="Genomic_DNA"/>
</dbReference>
<dbReference type="RefSeq" id="NP_001022278.1">
    <property type="nucleotide sequence ID" value="NM_001027107.5"/>
</dbReference>
<dbReference type="SMR" id="Q5WRU0"/>
<dbReference type="FunCoup" id="Q5WRU0">
    <property type="interactions" value="3"/>
</dbReference>
<dbReference type="IntAct" id="Q5WRU0">
    <property type="interactions" value="2"/>
</dbReference>
<dbReference type="MINT" id="Q5WRU0"/>
<dbReference type="STRING" id="6239.R07G3.9.1"/>
<dbReference type="GlyCosmos" id="Q5WRU0">
    <property type="glycosylation" value="2 sites, No reported glycans"/>
</dbReference>
<dbReference type="PaxDb" id="6239-R07G3.9"/>
<dbReference type="EnsemblMetazoa" id="R07G3.9.1">
    <property type="protein sequence ID" value="R07G3.9.1"/>
    <property type="gene ID" value="WBGene00043050"/>
</dbReference>
<dbReference type="GeneID" id="259448"/>
<dbReference type="KEGG" id="cel:CELE_R07G3.9"/>
<dbReference type="UCSC" id="R07G3.9">
    <property type="organism name" value="c. elegans"/>
</dbReference>
<dbReference type="AGR" id="WB:WBGene00043050"/>
<dbReference type="CTD" id="259448"/>
<dbReference type="WormBase" id="R07G3.9">
    <property type="protein sequence ID" value="CE37545"/>
    <property type="gene ID" value="WBGene00043050"/>
    <property type="gene designation" value="oig-4"/>
</dbReference>
<dbReference type="eggNOG" id="ENOG502RYK7">
    <property type="taxonomic scope" value="Eukaryota"/>
</dbReference>
<dbReference type="GeneTree" id="ENSGT00970000196744"/>
<dbReference type="HOGENOM" id="CLU_120649_0_0_1"/>
<dbReference type="InParanoid" id="Q5WRU0"/>
<dbReference type="OMA" id="VLICKAK"/>
<dbReference type="OrthoDB" id="6127080at2759"/>
<dbReference type="PhylomeDB" id="Q5WRU0"/>
<dbReference type="PRO" id="PR:Q5WRU0"/>
<dbReference type="Proteomes" id="UP000001940">
    <property type="component" value="Chromosome II"/>
</dbReference>
<dbReference type="Bgee" id="WBGene00043050">
    <property type="expression patterns" value="Expressed in larva and 3 other cell types or tissues"/>
</dbReference>
<dbReference type="GO" id="GO:0005615">
    <property type="term" value="C:extracellular space"/>
    <property type="evidence" value="ECO:0000314"/>
    <property type="project" value="WormBase"/>
</dbReference>
<dbReference type="GO" id="GO:0031594">
    <property type="term" value="C:neuromuscular junction"/>
    <property type="evidence" value="ECO:0000314"/>
    <property type="project" value="WormBase"/>
</dbReference>
<dbReference type="CDD" id="cd00096">
    <property type="entry name" value="Ig"/>
    <property type="match status" value="1"/>
</dbReference>
<dbReference type="FunFam" id="2.60.40.10:FF:002854">
    <property type="entry name" value="Immunoglobulin domain-containing protein oig-4"/>
    <property type="match status" value="1"/>
</dbReference>
<dbReference type="Gene3D" id="2.60.40.10">
    <property type="entry name" value="Immunoglobulins"/>
    <property type="match status" value="1"/>
</dbReference>
<dbReference type="InterPro" id="IPR050958">
    <property type="entry name" value="Cell_Adh-Cytoskel_Orgn"/>
</dbReference>
<dbReference type="InterPro" id="IPR007110">
    <property type="entry name" value="Ig-like_dom"/>
</dbReference>
<dbReference type="InterPro" id="IPR036179">
    <property type="entry name" value="Ig-like_dom_sf"/>
</dbReference>
<dbReference type="InterPro" id="IPR013783">
    <property type="entry name" value="Ig-like_fold"/>
</dbReference>
<dbReference type="InterPro" id="IPR003599">
    <property type="entry name" value="Ig_sub"/>
</dbReference>
<dbReference type="InterPro" id="IPR003598">
    <property type="entry name" value="Ig_sub2"/>
</dbReference>
<dbReference type="PANTHER" id="PTHR45080">
    <property type="entry name" value="CONTACTIN 5"/>
    <property type="match status" value="1"/>
</dbReference>
<dbReference type="PANTHER" id="PTHR45080:SF34">
    <property type="entry name" value="MYOSIN LIGHT CHAIN KINASE, SMOOTH MUSCLE-LIKE"/>
    <property type="match status" value="1"/>
</dbReference>
<dbReference type="Pfam" id="PF13927">
    <property type="entry name" value="Ig_3"/>
    <property type="match status" value="1"/>
</dbReference>
<dbReference type="SMART" id="SM00409">
    <property type="entry name" value="IG"/>
    <property type="match status" value="1"/>
</dbReference>
<dbReference type="SMART" id="SM00408">
    <property type="entry name" value="IGc2"/>
    <property type="match status" value="1"/>
</dbReference>
<dbReference type="SUPFAM" id="SSF48726">
    <property type="entry name" value="Immunoglobulin"/>
    <property type="match status" value="1"/>
</dbReference>
<dbReference type="PROSITE" id="PS50835">
    <property type="entry name" value="IG_LIKE"/>
    <property type="match status" value="1"/>
</dbReference>
<organism evidence="6">
    <name type="scientific">Caenorhabditis elegans</name>
    <dbReference type="NCBI Taxonomy" id="6239"/>
    <lineage>
        <taxon>Eukaryota</taxon>
        <taxon>Metazoa</taxon>
        <taxon>Ecdysozoa</taxon>
        <taxon>Nematoda</taxon>
        <taxon>Chromadorea</taxon>
        <taxon>Rhabditida</taxon>
        <taxon>Rhabditina</taxon>
        <taxon>Rhabditomorpha</taxon>
        <taxon>Rhabditoidea</taxon>
        <taxon>Rhabditidae</taxon>
        <taxon>Peloderinae</taxon>
        <taxon>Caenorhabditis</taxon>
    </lineage>
</organism>
<accession>Q5WRU0</accession>
<proteinExistence type="evidence at protein level"/>
<feature type="signal peptide" evidence="1">
    <location>
        <begin position="1"/>
        <end position="22"/>
    </location>
</feature>
<feature type="chain" id="PRO_5004263494" description="Immunoglobulin domain-containing protein oig-4" evidence="5">
    <location>
        <begin position="23"/>
        <end position="155"/>
    </location>
</feature>
<feature type="domain" description="Ig-like C2-type" evidence="2">
    <location>
        <begin position="73"/>
        <end position="154"/>
    </location>
</feature>
<feature type="glycosylation site" description="N-linked (GlcNAc...) asparagine" evidence="3">
    <location>
        <position position="55"/>
    </location>
</feature>
<feature type="glycosylation site" description="N-linked (GlcNAc...) asparagine" evidence="3">
    <location>
        <position position="114"/>
    </location>
</feature>
<feature type="disulfide bond" evidence="2">
    <location>
        <begin position="80"/>
        <end position="136"/>
    </location>
</feature>
<feature type="mutagenesis site" description="In kr39; the mutant protein is intracellularly retained in body wall muscle cells and not localized to neuromuscular junctions." evidence="4">
    <original>G</original>
    <variation>R</variation>
    <location>
        <position position="84"/>
    </location>
</feature>
<gene>
    <name evidence="7" type="primary">oig-4</name>
    <name evidence="7" type="ORF">R07G3.9</name>
</gene>
<evidence type="ECO:0000255" key="1"/>
<evidence type="ECO:0000255" key="2">
    <source>
        <dbReference type="PROSITE-ProRule" id="PRU00114"/>
    </source>
</evidence>
<evidence type="ECO:0000255" key="3">
    <source>
        <dbReference type="PROSITE-ProRule" id="PRU00498"/>
    </source>
</evidence>
<evidence type="ECO:0000269" key="4">
    <source>
    </source>
</evidence>
<evidence type="ECO:0000305" key="5"/>
<evidence type="ECO:0000312" key="6">
    <source>
        <dbReference type="Proteomes" id="UP000001940"/>
    </source>
</evidence>
<evidence type="ECO:0000312" key="7">
    <source>
        <dbReference type="WormBase" id="R07G3.9"/>
    </source>
</evidence>
<comment type="function">
    <text evidence="4">Required for the localization of acetylcholine receptors at neuromuscular junctions and for subsequently controlling the response evoked by receptor stimulation.</text>
</comment>
<comment type="subunit">
    <text evidence="4">Interacts with the non-alpha subunit of nicotinic acetylcholine receptor unc-29 and lev-10 to stabilize the complex formed between unc-29 and lev-10.</text>
</comment>
<comment type="subcellular location">
    <subcellularLocation>
        <location evidence="4">Synapse</location>
    </subcellularLocation>
    <subcellularLocation>
        <location evidence="4">Secreted</location>
    </subcellularLocation>
    <text evidence="4">Secreted by body wall cells. Co-localizes with and requires acetylcholine receptors for localization at neuromuscular junctions.</text>
</comment>
<comment type="tissue specificity">
    <text evidence="4">Expressed in body wall muscle cells, the pharyngeal muscle cell pm6 and in four head neurons.</text>
</comment>
<comment type="disruption phenotype">
    <text evidence="4">Disrupted localization of levamisole-sensitive nicotinic acetylcholine receptor subunits in 80% of mutants, and this is mostly in conjunction with the disrupted localization of the associated transmembrane protein lev-10 and secreted protein lev-9. This results in increased sensitivity to the acetylcholine agonist levamisole.</text>
</comment>
<sequence length="155" mass="17556">MSFRLWGRCIFFFCFLLEAIDSRGGRRGGKGKGKSNLQFAQVAEFSLVQTVLSDNRSAQIITGSHFSQTYRLGYKLLIICKARGDPRPTIKWYKEGAEIQPKASIHYYEKPIENDTIWSKLEVDPATMGDQGVYACVANNPHGVMAKNFKAEYTY</sequence>
<name>OIG4_CAEEL</name>
<reference evidence="6" key="1">
    <citation type="journal article" date="1998" name="Science">
        <title>Genome sequence of the nematode C. elegans: a platform for investigating biology.</title>
        <authorList>
            <consortium name="The C. elegans sequencing consortium"/>
        </authorList>
    </citation>
    <scope>NUCLEOTIDE SEQUENCE [LARGE SCALE GENOMIC DNA]</scope>
    <source>
        <strain evidence="6">Bristol N2</strain>
    </source>
</reference>
<reference evidence="5" key="2">
    <citation type="journal article" date="2011" name="EMBO J.">
        <title>A single immunoglobulin-domain protein required for clustering acetylcholine receptors in C. elegans.</title>
        <authorList>
            <person name="Rapti G."/>
            <person name="Richmond J."/>
            <person name="Bessereau J.L."/>
        </authorList>
    </citation>
    <scope>FUNCTION</scope>
    <scope>INTERACTION WITH UNC-29 AND LEV-10</scope>
    <scope>SUBCELLULAR LOCATION</scope>
    <scope>TISSUE SPECIFICITY</scope>
    <scope>DISRUPTION PHENOTYPE</scope>
    <scope>MUTAGENESIS OF GLY-84</scope>
</reference>